<sequence length="737" mass="83096">MDDDKPFQPKNISKMAELFMECEEEELEPWQKKVEETQDEDDDELIFVGEISSSKPAISNILNRGHSSSSSKGIKSEPHSPGIPEIFRTASQRCRDPPSNPVAASPRFHLVSKSSQSSVTVENASKPDFTKNSQVGSDNSSILLFDSTQESLPPSQDIPAIFREGMKNTSYVLKHPSTSKVNSVTPKKPKTSEDVPQINPSTSLPLIGSPPVTSSQVMLSKGTNTSSPYDAGADYLRACPKCNVQFNLLDPLKYHMKHCCPDMITKFLGVIVKSERPCDEDKTDSETGKLIMLVNEFYYGRHEGVTEKEPKTYTTFKCFSCSKVLKNNIRFMNHMKHHLELEKQNNESWENHTTCQHCYRQYPTPFQLQCHIESTHTPHEFSTICKICELSFETEHILLQHMKDTHKPGEMPYVCQVCQFRSSTFSDVEAHFRAAHENTKNLLCPFCLKVSKMATPYMNHYMKHQKKGVHRCPKCRLQFLTSKEKAEHKAQHRTFIKPKELEGLPPGAKVTIRASLGPLQSKLPTAPFGCAPGTSFLQVTPPTSQNTTARNPRKSNASRSKTSKLHATTSTASKVNTSKPRGRIAKSKAKPSYKQKRQRNRKNKMSLALKNIRCRRGIHKCIECHSKIKDFASHFSIYIHCSFCKYNTNCNKAFVNHMMSSHSNHPGKRFCIFKKHSGTLRGITLVCLKCDFLADSSGLDRMAKHLSQRKTHTCQVIIENVSKSTSTSEPTTGCSLK</sequence>
<feature type="chain" id="PRO_0000227975" description="Zinc finger protein 280C">
    <location>
        <begin position="1"/>
        <end position="737"/>
    </location>
</feature>
<feature type="zinc finger region" description="C2H2-type 1">
    <location>
        <begin position="316"/>
        <end position="338"/>
    </location>
</feature>
<feature type="zinc finger region" description="C2H2-type 2">
    <location>
        <begin position="353"/>
        <end position="376"/>
    </location>
</feature>
<feature type="zinc finger region" description="C2H2-type 3">
    <location>
        <begin position="383"/>
        <end position="406"/>
    </location>
</feature>
<feature type="zinc finger region" description="C2H2-type 4">
    <location>
        <begin position="413"/>
        <end position="436"/>
    </location>
</feature>
<feature type="zinc finger region" description="C2H2-type 5">
    <location>
        <begin position="470"/>
        <end position="492"/>
    </location>
</feature>
<feature type="region of interest" description="Disordered" evidence="1">
    <location>
        <begin position="57"/>
        <end position="137"/>
    </location>
</feature>
<feature type="region of interest" description="Disordered" evidence="1">
    <location>
        <begin position="176"/>
        <end position="223"/>
    </location>
</feature>
<feature type="region of interest" description="Disordered" evidence="1">
    <location>
        <begin position="535"/>
        <end position="602"/>
    </location>
</feature>
<feature type="compositionally biased region" description="Polar residues" evidence="1">
    <location>
        <begin position="57"/>
        <end position="66"/>
    </location>
</feature>
<feature type="compositionally biased region" description="Polar residues" evidence="1">
    <location>
        <begin position="112"/>
        <end position="123"/>
    </location>
</feature>
<feature type="compositionally biased region" description="Polar residues" evidence="1">
    <location>
        <begin position="176"/>
        <end position="185"/>
    </location>
</feature>
<feature type="compositionally biased region" description="Polar residues" evidence="1">
    <location>
        <begin position="211"/>
        <end position="223"/>
    </location>
</feature>
<feature type="compositionally biased region" description="Polar residues" evidence="1">
    <location>
        <begin position="535"/>
        <end position="579"/>
    </location>
</feature>
<feature type="compositionally biased region" description="Basic residues" evidence="1">
    <location>
        <begin position="580"/>
        <end position="602"/>
    </location>
</feature>
<feature type="modified residue" description="Phosphoserine" evidence="3 5 6">
    <location>
        <position position="80"/>
    </location>
</feature>
<feature type="modified residue" description="Phosphothreonine" evidence="6">
    <location>
        <position position="223"/>
    </location>
</feature>
<feature type="modified residue" description="Phosphoserine" evidence="5 6">
    <location>
        <position position="227"/>
    </location>
</feature>
<feature type="modified residue" description="Phosphothreonine" evidence="4">
    <location>
        <position position="540"/>
    </location>
</feature>
<feature type="cross-link" description="Glycyl lysine isopeptide (Lys-Gly) (interchain with G-Cter in SUMO2)" evidence="10">
    <location>
        <position position="5"/>
    </location>
</feature>
<feature type="cross-link" description="Glycyl lysine isopeptide (Lys-Gly) (interchain with G-Cter in SUMO2)" evidence="10">
    <location>
        <position position="10"/>
    </location>
</feature>
<feature type="cross-link" description="Glycyl lysine isopeptide (Lys-Gly) (interchain with G-Cter in SUMO2)" evidence="10">
    <location>
        <position position="14"/>
    </location>
</feature>
<feature type="cross-link" description="Glycyl lysine isopeptide (Lys-Gly) (interchain with G-Cter in SUMO2)" evidence="9 10">
    <location>
        <position position="33"/>
    </location>
</feature>
<feature type="cross-link" description="Glycyl lysine isopeptide (Lys-Gly) (interchain with G-Cter in SUMO2)" evidence="10">
    <location>
        <position position="55"/>
    </location>
</feature>
<feature type="cross-link" description="Glycyl lysine isopeptide (Lys-Gly) (interchain with G-Cter in SUMO2)" evidence="7 8 9 10">
    <location>
        <position position="75"/>
    </location>
</feature>
<feature type="cross-link" description="Glycyl lysine isopeptide (Lys-Gly) (interchain with G-Cter in SUMO2)" evidence="10">
    <location>
        <position position="113"/>
    </location>
</feature>
<feature type="cross-link" description="Glycyl lysine isopeptide (Lys-Gly) (interchain with G-Cter in SUMO2)" evidence="7 10">
    <location>
        <position position="126"/>
    </location>
</feature>
<feature type="cross-link" description="Glycyl lysine isopeptide (Lys-Gly) (interchain with G-Cter in SUMO2)" evidence="7 8 9 10">
    <location>
        <position position="167"/>
    </location>
</feature>
<feature type="cross-link" description="Glycyl lysine isopeptide (Lys-Gly) (interchain with G-Cter in SUMO2)" evidence="8 9 10">
    <location>
        <position position="174"/>
    </location>
</feature>
<feature type="cross-link" description="Glycyl lysine isopeptide (Lys-Gly) (interchain with G-Cter in SUMO2)" evidence="10">
    <location>
        <position position="180"/>
    </location>
</feature>
<feature type="cross-link" description="Glycyl lysine isopeptide (Lys-Gly) (interchain with G-Cter in SUMO2)" evidence="10">
    <location>
        <position position="187"/>
    </location>
</feature>
<feature type="cross-link" description="Glycyl lysine isopeptide (Lys-Gly) (interchain with G-Cter in SUMO2)" evidence="7 8 9 10">
    <location>
        <position position="273"/>
    </location>
</feature>
<feature type="cross-link" description="Glycyl lysine isopeptide (Lys-Gly) (interchain with G-Cter in SUMO2)" evidence="10">
    <location>
        <position position="522"/>
    </location>
</feature>
<feature type="cross-link" description="Glycyl lysine isopeptide (Lys-Gly) (interchain with G-Cter in SUMO2)" evidence="10">
    <location>
        <position position="564"/>
    </location>
</feature>
<feature type="cross-link" description="Glycyl lysine isopeptide (Lys-Gly) (interchain with G-Cter in SUMO2)" evidence="10">
    <location>
        <position position="574"/>
    </location>
</feature>
<reference key="1">
    <citation type="journal article" date="2004" name="Nat. Genet.">
        <title>Complete sequencing and characterization of 21,243 full-length human cDNAs.</title>
        <authorList>
            <person name="Ota T."/>
            <person name="Suzuki Y."/>
            <person name="Nishikawa T."/>
            <person name="Otsuki T."/>
            <person name="Sugiyama T."/>
            <person name="Irie R."/>
            <person name="Wakamatsu A."/>
            <person name="Hayashi K."/>
            <person name="Sato H."/>
            <person name="Nagai K."/>
            <person name="Kimura K."/>
            <person name="Makita H."/>
            <person name="Sekine M."/>
            <person name="Obayashi M."/>
            <person name="Nishi T."/>
            <person name="Shibahara T."/>
            <person name="Tanaka T."/>
            <person name="Ishii S."/>
            <person name="Yamamoto J."/>
            <person name="Saito K."/>
            <person name="Kawai Y."/>
            <person name="Isono Y."/>
            <person name="Nakamura Y."/>
            <person name="Nagahari K."/>
            <person name="Murakami K."/>
            <person name="Yasuda T."/>
            <person name="Iwayanagi T."/>
            <person name="Wagatsuma M."/>
            <person name="Shiratori A."/>
            <person name="Sudo H."/>
            <person name="Hosoiri T."/>
            <person name="Kaku Y."/>
            <person name="Kodaira H."/>
            <person name="Kondo H."/>
            <person name="Sugawara M."/>
            <person name="Takahashi M."/>
            <person name="Kanda K."/>
            <person name="Yokoi T."/>
            <person name="Furuya T."/>
            <person name="Kikkawa E."/>
            <person name="Omura Y."/>
            <person name="Abe K."/>
            <person name="Kamihara K."/>
            <person name="Katsuta N."/>
            <person name="Sato K."/>
            <person name="Tanikawa M."/>
            <person name="Yamazaki M."/>
            <person name="Ninomiya K."/>
            <person name="Ishibashi T."/>
            <person name="Yamashita H."/>
            <person name="Murakawa K."/>
            <person name="Fujimori K."/>
            <person name="Tanai H."/>
            <person name="Kimata M."/>
            <person name="Watanabe M."/>
            <person name="Hiraoka S."/>
            <person name="Chiba Y."/>
            <person name="Ishida S."/>
            <person name="Ono Y."/>
            <person name="Takiguchi S."/>
            <person name="Watanabe S."/>
            <person name="Yosida M."/>
            <person name="Hotuta T."/>
            <person name="Kusano J."/>
            <person name="Kanehori K."/>
            <person name="Takahashi-Fujii A."/>
            <person name="Hara H."/>
            <person name="Tanase T.-O."/>
            <person name="Nomura Y."/>
            <person name="Togiya S."/>
            <person name="Komai F."/>
            <person name="Hara R."/>
            <person name="Takeuchi K."/>
            <person name="Arita M."/>
            <person name="Imose N."/>
            <person name="Musashino K."/>
            <person name="Yuuki H."/>
            <person name="Oshima A."/>
            <person name="Sasaki N."/>
            <person name="Aotsuka S."/>
            <person name="Yoshikawa Y."/>
            <person name="Matsunawa H."/>
            <person name="Ichihara T."/>
            <person name="Shiohata N."/>
            <person name="Sano S."/>
            <person name="Moriya S."/>
            <person name="Momiyama H."/>
            <person name="Satoh N."/>
            <person name="Takami S."/>
            <person name="Terashima Y."/>
            <person name="Suzuki O."/>
            <person name="Nakagawa S."/>
            <person name="Senoh A."/>
            <person name="Mizoguchi H."/>
            <person name="Goto Y."/>
            <person name="Shimizu F."/>
            <person name="Wakebe H."/>
            <person name="Hishigaki H."/>
            <person name="Watanabe T."/>
            <person name="Sugiyama A."/>
            <person name="Takemoto M."/>
            <person name="Kawakami B."/>
            <person name="Yamazaki M."/>
            <person name="Watanabe K."/>
            <person name="Kumagai A."/>
            <person name="Itakura S."/>
            <person name="Fukuzumi Y."/>
            <person name="Fujimori Y."/>
            <person name="Komiyama M."/>
            <person name="Tashiro H."/>
            <person name="Tanigami A."/>
            <person name="Fujiwara T."/>
            <person name="Ono T."/>
            <person name="Yamada K."/>
            <person name="Fujii Y."/>
            <person name="Ozaki K."/>
            <person name="Hirao M."/>
            <person name="Ohmori Y."/>
            <person name="Kawabata A."/>
            <person name="Hikiji T."/>
            <person name="Kobatake N."/>
            <person name="Inagaki H."/>
            <person name="Ikema Y."/>
            <person name="Okamoto S."/>
            <person name="Okitani R."/>
            <person name="Kawakami T."/>
            <person name="Noguchi S."/>
            <person name="Itoh T."/>
            <person name="Shigeta K."/>
            <person name="Senba T."/>
            <person name="Matsumura K."/>
            <person name="Nakajima Y."/>
            <person name="Mizuno T."/>
            <person name="Morinaga M."/>
            <person name="Sasaki M."/>
            <person name="Togashi T."/>
            <person name="Oyama M."/>
            <person name="Hata H."/>
            <person name="Watanabe M."/>
            <person name="Komatsu T."/>
            <person name="Mizushima-Sugano J."/>
            <person name="Satoh T."/>
            <person name="Shirai Y."/>
            <person name="Takahashi Y."/>
            <person name="Nakagawa K."/>
            <person name="Okumura K."/>
            <person name="Nagase T."/>
            <person name="Nomura N."/>
            <person name="Kikuchi H."/>
            <person name="Masuho Y."/>
            <person name="Yamashita R."/>
            <person name="Nakai K."/>
            <person name="Yada T."/>
            <person name="Nakamura Y."/>
            <person name="Ohara O."/>
            <person name="Isogai T."/>
            <person name="Sugano S."/>
        </authorList>
    </citation>
    <scope>NUCLEOTIDE SEQUENCE [LARGE SCALE MRNA]</scope>
    <source>
        <tissue>Colon</tissue>
        <tissue>Tongue</tissue>
    </source>
</reference>
<reference key="2">
    <citation type="journal article" date="2007" name="BMC Genomics">
        <title>The full-ORF clone resource of the German cDNA consortium.</title>
        <authorList>
            <person name="Bechtel S."/>
            <person name="Rosenfelder H."/>
            <person name="Duda A."/>
            <person name="Schmidt C.P."/>
            <person name="Ernst U."/>
            <person name="Wellenreuther R."/>
            <person name="Mehrle A."/>
            <person name="Schuster C."/>
            <person name="Bahr A."/>
            <person name="Bloecker H."/>
            <person name="Heubner D."/>
            <person name="Hoerlein A."/>
            <person name="Michel G."/>
            <person name="Wedler H."/>
            <person name="Koehrer K."/>
            <person name="Ottenwaelder B."/>
            <person name="Poustka A."/>
            <person name="Wiemann S."/>
            <person name="Schupp I."/>
        </authorList>
    </citation>
    <scope>NUCLEOTIDE SEQUENCE [LARGE SCALE MRNA]</scope>
    <source>
        <tissue>Testis</tissue>
    </source>
</reference>
<reference key="3">
    <citation type="journal article" date="2005" name="Nature">
        <title>The DNA sequence of the human X chromosome.</title>
        <authorList>
            <person name="Ross M.T."/>
            <person name="Grafham D.V."/>
            <person name="Coffey A.J."/>
            <person name="Scherer S."/>
            <person name="McLay K."/>
            <person name="Muzny D."/>
            <person name="Platzer M."/>
            <person name="Howell G.R."/>
            <person name="Burrows C."/>
            <person name="Bird C.P."/>
            <person name="Frankish A."/>
            <person name="Lovell F.L."/>
            <person name="Howe K.L."/>
            <person name="Ashurst J.L."/>
            <person name="Fulton R.S."/>
            <person name="Sudbrak R."/>
            <person name="Wen G."/>
            <person name="Jones M.C."/>
            <person name="Hurles M.E."/>
            <person name="Andrews T.D."/>
            <person name="Scott C.E."/>
            <person name="Searle S."/>
            <person name="Ramser J."/>
            <person name="Whittaker A."/>
            <person name="Deadman R."/>
            <person name="Carter N.P."/>
            <person name="Hunt S.E."/>
            <person name="Chen R."/>
            <person name="Cree A."/>
            <person name="Gunaratne P."/>
            <person name="Havlak P."/>
            <person name="Hodgson A."/>
            <person name="Metzker M.L."/>
            <person name="Richards S."/>
            <person name="Scott G."/>
            <person name="Steffen D."/>
            <person name="Sodergren E."/>
            <person name="Wheeler D.A."/>
            <person name="Worley K.C."/>
            <person name="Ainscough R."/>
            <person name="Ambrose K.D."/>
            <person name="Ansari-Lari M.A."/>
            <person name="Aradhya S."/>
            <person name="Ashwell R.I."/>
            <person name="Babbage A.K."/>
            <person name="Bagguley C.L."/>
            <person name="Ballabio A."/>
            <person name="Banerjee R."/>
            <person name="Barker G.E."/>
            <person name="Barlow K.F."/>
            <person name="Barrett I.P."/>
            <person name="Bates K.N."/>
            <person name="Beare D.M."/>
            <person name="Beasley H."/>
            <person name="Beasley O."/>
            <person name="Beck A."/>
            <person name="Bethel G."/>
            <person name="Blechschmidt K."/>
            <person name="Brady N."/>
            <person name="Bray-Allen S."/>
            <person name="Bridgeman A.M."/>
            <person name="Brown A.J."/>
            <person name="Brown M.J."/>
            <person name="Bonnin D."/>
            <person name="Bruford E.A."/>
            <person name="Buhay C."/>
            <person name="Burch P."/>
            <person name="Burford D."/>
            <person name="Burgess J."/>
            <person name="Burrill W."/>
            <person name="Burton J."/>
            <person name="Bye J.M."/>
            <person name="Carder C."/>
            <person name="Carrel L."/>
            <person name="Chako J."/>
            <person name="Chapman J.C."/>
            <person name="Chavez D."/>
            <person name="Chen E."/>
            <person name="Chen G."/>
            <person name="Chen Y."/>
            <person name="Chen Z."/>
            <person name="Chinault C."/>
            <person name="Ciccodicola A."/>
            <person name="Clark S.Y."/>
            <person name="Clarke G."/>
            <person name="Clee C.M."/>
            <person name="Clegg S."/>
            <person name="Clerc-Blankenburg K."/>
            <person name="Clifford K."/>
            <person name="Cobley V."/>
            <person name="Cole C.G."/>
            <person name="Conquer J.S."/>
            <person name="Corby N."/>
            <person name="Connor R.E."/>
            <person name="David R."/>
            <person name="Davies J."/>
            <person name="Davis C."/>
            <person name="Davis J."/>
            <person name="Delgado O."/>
            <person name="Deshazo D."/>
            <person name="Dhami P."/>
            <person name="Ding Y."/>
            <person name="Dinh H."/>
            <person name="Dodsworth S."/>
            <person name="Draper H."/>
            <person name="Dugan-Rocha S."/>
            <person name="Dunham A."/>
            <person name="Dunn M."/>
            <person name="Durbin K.J."/>
            <person name="Dutta I."/>
            <person name="Eades T."/>
            <person name="Ellwood M."/>
            <person name="Emery-Cohen A."/>
            <person name="Errington H."/>
            <person name="Evans K.L."/>
            <person name="Faulkner L."/>
            <person name="Francis F."/>
            <person name="Frankland J."/>
            <person name="Fraser A.E."/>
            <person name="Galgoczy P."/>
            <person name="Gilbert J."/>
            <person name="Gill R."/>
            <person name="Gloeckner G."/>
            <person name="Gregory S.G."/>
            <person name="Gribble S."/>
            <person name="Griffiths C."/>
            <person name="Grocock R."/>
            <person name="Gu Y."/>
            <person name="Gwilliam R."/>
            <person name="Hamilton C."/>
            <person name="Hart E.A."/>
            <person name="Hawes A."/>
            <person name="Heath P.D."/>
            <person name="Heitmann K."/>
            <person name="Hennig S."/>
            <person name="Hernandez J."/>
            <person name="Hinzmann B."/>
            <person name="Ho S."/>
            <person name="Hoffs M."/>
            <person name="Howden P.J."/>
            <person name="Huckle E.J."/>
            <person name="Hume J."/>
            <person name="Hunt P.J."/>
            <person name="Hunt A.R."/>
            <person name="Isherwood J."/>
            <person name="Jacob L."/>
            <person name="Johnson D."/>
            <person name="Jones S."/>
            <person name="de Jong P.J."/>
            <person name="Joseph S.S."/>
            <person name="Keenan S."/>
            <person name="Kelly S."/>
            <person name="Kershaw J.K."/>
            <person name="Khan Z."/>
            <person name="Kioschis P."/>
            <person name="Klages S."/>
            <person name="Knights A.J."/>
            <person name="Kosiura A."/>
            <person name="Kovar-Smith C."/>
            <person name="Laird G.K."/>
            <person name="Langford C."/>
            <person name="Lawlor S."/>
            <person name="Leversha M."/>
            <person name="Lewis L."/>
            <person name="Liu W."/>
            <person name="Lloyd C."/>
            <person name="Lloyd D.M."/>
            <person name="Loulseged H."/>
            <person name="Loveland J.E."/>
            <person name="Lovell J.D."/>
            <person name="Lozado R."/>
            <person name="Lu J."/>
            <person name="Lyne R."/>
            <person name="Ma J."/>
            <person name="Maheshwari M."/>
            <person name="Matthews L.H."/>
            <person name="McDowall J."/>
            <person name="McLaren S."/>
            <person name="McMurray A."/>
            <person name="Meidl P."/>
            <person name="Meitinger T."/>
            <person name="Milne S."/>
            <person name="Miner G."/>
            <person name="Mistry S.L."/>
            <person name="Morgan M."/>
            <person name="Morris S."/>
            <person name="Mueller I."/>
            <person name="Mullikin J.C."/>
            <person name="Nguyen N."/>
            <person name="Nordsiek G."/>
            <person name="Nyakatura G."/>
            <person name="O'dell C.N."/>
            <person name="Okwuonu G."/>
            <person name="Palmer S."/>
            <person name="Pandian R."/>
            <person name="Parker D."/>
            <person name="Parrish J."/>
            <person name="Pasternak S."/>
            <person name="Patel D."/>
            <person name="Pearce A.V."/>
            <person name="Pearson D.M."/>
            <person name="Pelan S.E."/>
            <person name="Perez L."/>
            <person name="Porter K.M."/>
            <person name="Ramsey Y."/>
            <person name="Reichwald K."/>
            <person name="Rhodes S."/>
            <person name="Ridler K.A."/>
            <person name="Schlessinger D."/>
            <person name="Schueler M.G."/>
            <person name="Sehra H.K."/>
            <person name="Shaw-Smith C."/>
            <person name="Shen H."/>
            <person name="Sheridan E.M."/>
            <person name="Shownkeen R."/>
            <person name="Skuce C.D."/>
            <person name="Smith M.L."/>
            <person name="Sotheran E.C."/>
            <person name="Steingruber H.E."/>
            <person name="Steward C.A."/>
            <person name="Storey R."/>
            <person name="Swann R.M."/>
            <person name="Swarbreck D."/>
            <person name="Tabor P.E."/>
            <person name="Taudien S."/>
            <person name="Taylor T."/>
            <person name="Teague B."/>
            <person name="Thomas K."/>
            <person name="Thorpe A."/>
            <person name="Timms K."/>
            <person name="Tracey A."/>
            <person name="Trevanion S."/>
            <person name="Tromans A.C."/>
            <person name="d'Urso M."/>
            <person name="Verduzco D."/>
            <person name="Villasana D."/>
            <person name="Waldron L."/>
            <person name="Wall M."/>
            <person name="Wang Q."/>
            <person name="Warren J."/>
            <person name="Warry G.L."/>
            <person name="Wei X."/>
            <person name="West A."/>
            <person name="Whitehead S.L."/>
            <person name="Whiteley M.N."/>
            <person name="Wilkinson J.E."/>
            <person name="Willey D.L."/>
            <person name="Williams G."/>
            <person name="Williams L."/>
            <person name="Williamson A."/>
            <person name="Williamson H."/>
            <person name="Wilming L."/>
            <person name="Woodmansey R.L."/>
            <person name="Wray P.W."/>
            <person name="Yen J."/>
            <person name="Zhang J."/>
            <person name="Zhou J."/>
            <person name="Zoghbi H."/>
            <person name="Zorilla S."/>
            <person name="Buck D."/>
            <person name="Reinhardt R."/>
            <person name="Poustka A."/>
            <person name="Rosenthal A."/>
            <person name="Lehrach H."/>
            <person name="Meindl A."/>
            <person name="Minx P.J."/>
            <person name="Hillier L.W."/>
            <person name="Willard H.F."/>
            <person name="Wilson R.K."/>
            <person name="Waterston R.H."/>
            <person name="Rice C.M."/>
            <person name="Vaudin M."/>
            <person name="Coulson A."/>
            <person name="Nelson D.L."/>
            <person name="Weinstock G."/>
            <person name="Sulston J.E."/>
            <person name="Durbin R.M."/>
            <person name="Hubbard T."/>
            <person name="Gibbs R.A."/>
            <person name="Beck S."/>
            <person name="Rogers J."/>
            <person name="Bentley D.R."/>
        </authorList>
    </citation>
    <scope>NUCLEOTIDE SEQUENCE [LARGE SCALE GENOMIC DNA]</scope>
</reference>
<reference key="4">
    <citation type="submission" date="2005-09" db="EMBL/GenBank/DDBJ databases">
        <authorList>
            <person name="Mural R.J."/>
            <person name="Istrail S."/>
            <person name="Sutton G.G."/>
            <person name="Florea L."/>
            <person name="Halpern A.L."/>
            <person name="Mobarry C.M."/>
            <person name="Lippert R."/>
            <person name="Walenz B."/>
            <person name="Shatkay H."/>
            <person name="Dew I."/>
            <person name="Miller J.R."/>
            <person name="Flanigan M.J."/>
            <person name="Edwards N.J."/>
            <person name="Bolanos R."/>
            <person name="Fasulo D."/>
            <person name="Halldorsson B.V."/>
            <person name="Hannenhalli S."/>
            <person name="Turner R."/>
            <person name="Yooseph S."/>
            <person name="Lu F."/>
            <person name="Nusskern D.R."/>
            <person name="Shue B.C."/>
            <person name="Zheng X.H."/>
            <person name="Zhong F."/>
            <person name="Delcher A.L."/>
            <person name="Huson D.H."/>
            <person name="Kravitz S.A."/>
            <person name="Mouchard L."/>
            <person name="Reinert K."/>
            <person name="Remington K.A."/>
            <person name="Clark A.G."/>
            <person name="Waterman M.S."/>
            <person name="Eichler E.E."/>
            <person name="Adams M.D."/>
            <person name="Hunkapiller M.W."/>
            <person name="Myers E.W."/>
            <person name="Venter J.C."/>
        </authorList>
    </citation>
    <scope>NUCLEOTIDE SEQUENCE [LARGE SCALE GENOMIC DNA]</scope>
</reference>
<reference key="5">
    <citation type="journal article" date="2004" name="Genome Res.">
        <title>The status, quality, and expansion of the NIH full-length cDNA project: the Mammalian Gene Collection (MGC).</title>
        <authorList>
            <consortium name="The MGC Project Team"/>
        </authorList>
    </citation>
    <scope>NUCLEOTIDE SEQUENCE [LARGE SCALE MRNA]</scope>
    <source>
        <tissue>Testis</tissue>
    </source>
</reference>
<reference key="6">
    <citation type="journal article" date="2007" name="Science">
        <title>ATM and ATR substrate analysis reveals extensive protein networks responsive to DNA damage.</title>
        <authorList>
            <person name="Matsuoka S."/>
            <person name="Ballif B.A."/>
            <person name="Smogorzewska A."/>
            <person name="McDonald E.R. III"/>
            <person name="Hurov K.E."/>
            <person name="Luo J."/>
            <person name="Bakalarski C.E."/>
            <person name="Zhao Z."/>
            <person name="Solimini N."/>
            <person name="Lerenthal Y."/>
            <person name="Shiloh Y."/>
            <person name="Gygi S.P."/>
            <person name="Elledge S.J."/>
        </authorList>
    </citation>
    <scope>IDENTIFICATION BY MASS SPECTROMETRY [LARGE SCALE ANALYSIS]</scope>
    <source>
        <tissue>Embryonic kidney</tissue>
    </source>
</reference>
<reference key="7">
    <citation type="journal article" date="2008" name="J. Proteome Res.">
        <title>Combining protein-based IMAC, peptide-based IMAC, and MudPIT for efficient phosphoproteomic analysis.</title>
        <authorList>
            <person name="Cantin G.T."/>
            <person name="Yi W."/>
            <person name="Lu B."/>
            <person name="Park S.K."/>
            <person name="Xu T."/>
            <person name="Lee J.-D."/>
            <person name="Yates J.R. III"/>
        </authorList>
    </citation>
    <scope>PHOSPHORYLATION [LARGE SCALE ANALYSIS] AT SER-80</scope>
    <scope>IDENTIFICATION BY MASS SPECTROMETRY [LARGE SCALE ANALYSIS]</scope>
    <source>
        <tissue>Cervix carcinoma</tissue>
    </source>
</reference>
<reference key="8">
    <citation type="journal article" date="2008" name="Proc. Natl. Acad. Sci. U.S.A.">
        <title>A quantitative atlas of mitotic phosphorylation.</title>
        <authorList>
            <person name="Dephoure N."/>
            <person name="Zhou C."/>
            <person name="Villen J."/>
            <person name="Beausoleil S.A."/>
            <person name="Bakalarski C.E."/>
            <person name="Elledge S.J."/>
            <person name="Gygi S.P."/>
        </authorList>
    </citation>
    <scope>PHOSPHORYLATION [LARGE SCALE ANALYSIS] AT THR-540</scope>
    <scope>IDENTIFICATION BY MASS SPECTROMETRY [LARGE SCALE ANALYSIS]</scope>
    <source>
        <tissue>Cervix carcinoma</tissue>
    </source>
</reference>
<reference key="9">
    <citation type="journal article" date="2010" name="Sci. Signal.">
        <title>Quantitative phosphoproteomics reveals widespread full phosphorylation site occupancy during mitosis.</title>
        <authorList>
            <person name="Olsen J.V."/>
            <person name="Vermeulen M."/>
            <person name="Santamaria A."/>
            <person name="Kumar C."/>
            <person name="Miller M.L."/>
            <person name="Jensen L.J."/>
            <person name="Gnad F."/>
            <person name="Cox J."/>
            <person name="Jensen T.S."/>
            <person name="Nigg E.A."/>
            <person name="Brunak S."/>
            <person name="Mann M."/>
        </authorList>
    </citation>
    <scope>PHOSPHORYLATION [LARGE SCALE ANALYSIS] AT SER-80 AND SER-227</scope>
    <scope>IDENTIFICATION BY MASS SPECTROMETRY [LARGE SCALE ANALYSIS]</scope>
    <source>
        <tissue>Cervix carcinoma</tissue>
    </source>
</reference>
<reference key="10">
    <citation type="journal article" date="2013" name="J. Proteome Res.">
        <title>Toward a comprehensive characterization of a human cancer cell phosphoproteome.</title>
        <authorList>
            <person name="Zhou H."/>
            <person name="Di Palma S."/>
            <person name="Preisinger C."/>
            <person name="Peng M."/>
            <person name="Polat A.N."/>
            <person name="Heck A.J."/>
            <person name="Mohammed S."/>
        </authorList>
    </citation>
    <scope>PHOSPHORYLATION [LARGE SCALE ANALYSIS] AT SER-80; THR-223 AND SER-227</scope>
    <scope>IDENTIFICATION BY MASS SPECTROMETRY [LARGE SCALE ANALYSIS]</scope>
    <source>
        <tissue>Cervix carcinoma</tissue>
        <tissue>Erythroleukemia</tissue>
    </source>
</reference>
<reference key="11">
    <citation type="journal article" date="2014" name="Nat. Struct. Mol. Biol.">
        <title>Uncovering global SUMOylation signaling networks in a site-specific manner.</title>
        <authorList>
            <person name="Hendriks I.A."/>
            <person name="D'Souza R.C."/>
            <person name="Yang B."/>
            <person name="Verlaan-de Vries M."/>
            <person name="Mann M."/>
            <person name="Vertegaal A.C."/>
        </authorList>
    </citation>
    <scope>SUMOYLATION [LARGE SCALE ANALYSIS] AT LYS-75; LYS-126; LYS-167 AND LYS-273</scope>
    <scope>IDENTIFICATION BY MASS SPECTROMETRY [LARGE SCALE ANALYSIS]</scope>
</reference>
<reference key="12">
    <citation type="journal article" date="2015" name="Cell Rep.">
        <title>SUMO-2 orchestrates chromatin modifiers in response to DNA damage.</title>
        <authorList>
            <person name="Hendriks I.A."/>
            <person name="Treffers L.W."/>
            <person name="Verlaan-de Vries M."/>
            <person name="Olsen J.V."/>
            <person name="Vertegaal A.C."/>
        </authorList>
    </citation>
    <scope>SUMOYLATION [LARGE SCALE ANALYSIS] AT LYS-33; LYS-75; LYS-167; LYS-174 AND LYS-273</scope>
    <scope>IDENTIFICATION BY MASS SPECTROMETRY [LARGE SCALE ANALYSIS]</scope>
</reference>
<reference key="13">
    <citation type="journal article" date="2015" name="Mol. Cell. Proteomics">
        <title>System-wide analysis of SUMOylation dynamics in response to replication stress reveals novel small ubiquitin-like modified target proteins and acceptor lysines relevant for genome stability.</title>
        <authorList>
            <person name="Xiao Z."/>
            <person name="Chang J.G."/>
            <person name="Hendriks I.A."/>
            <person name="Sigurdsson J.O."/>
            <person name="Olsen J.V."/>
            <person name="Vertegaal A.C."/>
        </authorList>
    </citation>
    <scope>SUMOYLATION [LARGE SCALE ANALYSIS] AT LYS-75; LYS-167; LYS-174 AND LYS-273</scope>
    <scope>IDENTIFICATION BY MASS SPECTROMETRY [LARGE SCALE ANALYSIS]</scope>
</reference>
<reference key="14">
    <citation type="journal article" date="2017" name="Nat. Struct. Mol. Biol.">
        <title>Site-specific mapping of the human SUMO proteome reveals co-modification with phosphorylation.</title>
        <authorList>
            <person name="Hendriks I.A."/>
            <person name="Lyon D."/>
            <person name="Young C."/>
            <person name="Jensen L.J."/>
            <person name="Vertegaal A.C."/>
            <person name="Nielsen M.L."/>
        </authorList>
    </citation>
    <scope>SUMOYLATION [LARGE SCALE ANALYSIS] AT LYS-5; LYS-10; LYS-14; LYS-33; LYS-55; LYS-75; LYS-113; LYS-126; LYS-167; LYS-174; LYS-180; LYS-187; LYS-273; LYS-522; LYS-564 AND LYS-574</scope>
    <scope>IDENTIFICATION BY MASS SPECTROMETRY [LARGE SCALE ANALYSIS]</scope>
</reference>
<organism>
    <name type="scientific">Homo sapiens</name>
    <name type="common">Human</name>
    <dbReference type="NCBI Taxonomy" id="9606"/>
    <lineage>
        <taxon>Eukaryota</taxon>
        <taxon>Metazoa</taxon>
        <taxon>Chordata</taxon>
        <taxon>Craniata</taxon>
        <taxon>Vertebrata</taxon>
        <taxon>Euteleostomi</taxon>
        <taxon>Mammalia</taxon>
        <taxon>Eutheria</taxon>
        <taxon>Euarchontoglires</taxon>
        <taxon>Primates</taxon>
        <taxon>Haplorrhini</taxon>
        <taxon>Catarrhini</taxon>
        <taxon>Hominidae</taxon>
        <taxon>Homo</taxon>
    </lineage>
</organism>
<dbReference type="EMBL" id="AK000102">
    <property type="protein sequence ID" value="BAA90947.1"/>
    <property type="status" value="ALT_SEQ"/>
    <property type="molecule type" value="mRNA"/>
</dbReference>
<dbReference type="EMBL" id="AK290373">
    <property type="protein sequence ID" value="BAF83062.1"/>
    <property type="molecule type" value="mRNA"/>
</dbReference>
<dbReference type="EMBL" id="AL834333">
    <property type="protein sequence ID" value="CAD39001.1"/>
    <property type="molecule type" value="mRNA"/>
</dbReference>
<dbReference type="EMBL" id="AL023799">
    <property type="status" value="NOT_ANNOTATED_CDS"/>
    <property type="molecule type" value="Genomic_DNA"/>
</dbReference>
<dbReference type="EMBL" id="AL139234">
    <property type="status" value="NOT_ANNOTATED_CDS"/>
    <property type="molecule type" value="Genomic_DNA"/>
</dbReference>
<dbReference type="EMBL" id="CH471107">
    <property type="protein sequence ID" value="EAX11806.1"/>
    <property type="molecule type" value="Genomic_DNA"/>
</dbReference>
<dbReference type="EMBL" id="BC051728">
    <property type="protein sequence ID" value="AAH51728.1"/>
    <property type="molecule type" value="mRNA"/>
</dbReference>
<dbReference type="CCDS" id="CCDS14622.1"/>
<dbReference type="RefSeq" id="NP_060136.1">
    <property type="nucleotide sequence ID" value="NM_017666.5"/>
</dbReference>
<dbReference type="BioGRID" id="120749">
    <property type="interactions" value="64"/>
</dbReference>
<dbReference type="ELM" id="Q8ND82"/>
<dbReference type="FunCoup" id="Q8ND82">
    <property type="interactions" value="1078"/>
</dbReference>
<dbReference type="IntAct" id="Q8ND82">
    <property type="interactions" value="37"/>
</dbReference>
<dbReference type="MINT" id="Q8ND82"/>
<dbReference type="STRING" id="9606.ENSP00000360017"/>
<dbReference type="CarbonylDB" id="Q8ND82"/>
<dbReference type="GlyGen" id="Q8ND82">
    <property type="glycosylation" value="2 sites, 1 N-linked glycan (1 site), 1 O-linked glycan (1 site)"/>
</dbReference>
<dbReference type="iPTMnet" id="Q8ND82"/>
<dbReference type="PhosphoSitePlus" id="Q8ND82"/>
<dbReference type="SwissPalm" id="Q8ND82"/>
<dbReference type="BioMuta" id="ZNF280C"/>
<dbReference type="DMDM" id="74751215"/>
<dbReference type="jPOST" id="Q8ND82"/>
<dbReference type="MassIVE" id="Q8ND82"/>
<dbReference type="PaxDb" id="9606-ENSP00000360017"/>
<dbReference type="PeptideAtlas" id="Q8ND82"/>
<dbReference type="ProteomicsDB" id="72987"/>
<dbReference type="Pumba" id="Q8ND82"/>
<dbReference type="Antibodypedia" id="30167">
    <property type="antibodies" value="75 antibodies from 22 providers"/>
</dbReference>
<dbReference type="DNASU" id="55609"/>
<dbReference type="Ensembl" id="ENST00000370978.9">
    <property type="protein sequence ID" value="ENSP00000360017.4"/>
    <property type="gene ID" value="ENSG00000056277.16"/>
</dbReference>
<dbReference type="GeneID" id="55609"/>
<dbReference type="KEGG" id="hsa:55609"/>
<dbReference type="MANE-Select" id="ENST00000370978.9">
    <property type="protein sequence ID" value="ENSP00000360017.4"/>
    <property type="RefSeq nucleotide sequence ID" value="NM_017666.5"/>
    <property type="RefSeq protein sequence ID" value="NP_060136.1"/>
</dbReference>
<dbReference type="UCSC" id="uc004evm.4">
    <property type="organism name" value="human"/>
</dbReference>
<dbReference type="AGR" id="HGNC:25955"/>
<dbReference type="CTD" id="55609"/>
<dbReference type="DisGeNET" id="55609"/>
<dbReference type="GeneCards" id="ZNF280C"/>
<dbReference type="HGNC" id="HGNC:25955">
    <property type="gene designation" value="ZNF280C"/>
</dbReference>
<dbReference type="HPA" id="ENSG00000056277">
    <property type="expression patterns" value="Tissue enhanced (testis)"/>
</dbReference>
<dbReference type="neXtProt" id="NX_Q8ND82"/>
<dbReference type="OpenTargets" id="ENSG00000056277"/>
<dbReference type="PharmGKB" id="PA162409961"/>
<dbReference type="VEuPathDB" id="HostDB:ENSG00000056277"/>
<dbReference type="eggNOG" id="KOG1721">
    <property type="taxonomic scope" value="Eukaryota"/>
</dbReference>
<dbReference type="GeneTree" id="ENSGT00940000162128"/>
<dbReference type="HOGENOM" id="CLU_010097_1_0_1"/>
<dbReference type="InParanoid" id="Q8ND82"/>
<dbReference type="OMA" id="PKCNIQF"/>
<dbReference type="OrthoDB" id="10032537at2759"/>
<dbReference type="PAN-GO" id="Q8ND82">
    <property type="GO annotations" value="3 GO annotations based on evolutionary models"/>
</dbReference>
<dbReference type="PhylomeDB" id="Q8ND82"/>
<dbReference type="TreeFam" id="TF331707"/>
<dbReference type="PathwayCommons" id="Q8ND82"/>
<dbReference type="SignaLink" id="Q8ND82"/>
<dbReference type="BioGRID-ORCS" id="55609">
    <property type="hits" value="15 hits in 786 CRISPR screens"/>
</dbReference>
<dbReference type="ChiTaRS" id="ZNF280C">
    <property type="organism name" value="human"/>
</dbReference>
<dbReference type="GenomeRNAi" id="55609"/>
<dbReference type="Pharos" id="Q8ND82">
    <property type="development level" value="Tdark"/>
</dbReference>
<dbReference type="PRO" id="PR:Q8ND82"/>
<dbReference type="Proteomes" id="UP000005640">
    <property type="component" value="Chromosome X"/>
</dbReference>
<dbReference type="RNAct" id="Q8ND82">
    <property type="molecule type" value="protein"/>
</dbReference>
<dbReference type="Bgee" id="ENSG00000056277">
    <property type="expression patterns" value="Expressed in secondary oocyte and 118 other cell types or tissues"/>
</dbReference>
<dbReference type="ExpressionAtlas" id="Q8ND82">
    <property type="expression patterns" value="baseline and differential"/>
</dbReference>
<dbReference type="GO" id="GO:0005634">
    <property type="term" value="C:nucleus"/>
    <property type="evidence" value="ECO:0007669"/>
    <property type="project" value="UniProtKB-SubCell"/>
</dbReference>
<dbReference type="GO" id="GO:0000981">
    <property type="term" value="F:DNA-binding transcription factor activity, RNA polymerase II-specific"/>
    <property type="evidence" value="ECO:0000318"/>
    <property type="project" value="GO_Central"/>
</dbReference>
<dbReference type="GO" id="GO:0000978">
    <property type="term" value="F:RNA polymerase II cis-regulatory region sequence-specific DNA binding"/>
    <property type="evidence" value="ECO:0000318"/>
    <property type="project" value="GO_Central"/>
</dbReference>
<dbReference type="GO" id="GO:0008270">
    <property type="term" value="F:zinc ion binding"/>
    <property type="evidence" value="ECO:0007669"/>
    <property type="project" value="UniProtKB-KW"/>
</dbReference>
<dbReference type="GO" id="GO:0006355">
    <property type="term" value="P:regulation of DNA-templated transcription"/>
    <property type="evidence" value="ECO:0000318"/>
    <property type="project" value="GO_Central"/>
</dbReference>
<dbReference type="FunFam" id="3.30.160.60:FF:000298">
    <property type="entry name" value="zinc finger protein 280D isoform X1"/>
    <property type="match status" value="1"/>
</dbReference>
<dbReference type="Gene3D" id="3.30.160.60">
    <property type="entry name" value="Classic Zinc Finger"/>
    <property type="match status" value="1"/>
</dbReference>
<dbReference type="InterPro" id="IPR025243">
    <property type="entry name" value="DUF4195"/>
</dbReference>
<dbReference type="InterPro" id="IPR050527">
    <property type="entry name" value="Snail/Krueppel_Znf"/>
</dbReference>
<dbReference type="InterPro" id="IPR036236">
    <property type="entry name" value="Znf_C2H2_sf"/>
</dbReference>
<dbReference type="InterPro" id="IPR013087">
    <property type="entry name" value="Znf_C2H2_type"/>
</dbReference>
<dbReference type="PANTHER" id="PTHR24388">
    <property type="entry name" value="ZINC FINGER PROTEIN"/>
    <property type="match status" value="1"/>
</dbReference>
<dbReference type="PANTHER" id="PTHR24388:SF62">
    <property type="entry name" value="ZINC FINGER PROTEIN 280C"/>
    <property type="match status" value="1"/>
</dbReference>
<dbReference type="Pfam" id="PF13836">
    <property type="entry name" value="DUF4195"/>
    <property type="match status" value="1"/>
</dbReference>
<dbReference type="Pfam" id="PF25414">
    <property type="entry name" value="zf-C2H2_Z280C_D"/>
    <property type="match status" value="1"/>
</dbReference>
<dbReference type="Pfam" id="PF25429">
    <property type="entry name" value="zf-POGZ"/>
    <property type="match status" value="1"/>
</dbReference>
<dbReference type="SMART" id="SM00355">
    <property type="entry name" value="ZnF_C2H2"/>
    <property type="match status" value="9"/>
</dbReference>
<dbReference type="SUPFAM" id="SSF57667">
    <property type="entry name" value="beta-beta-alpha zinc fingers"/>
    <property type="match status" value="1"/>
</dbReference>
<dbReference type="PROSITE" id="PS00028">
    <property type="entry name" value="ZINC_FINGER_C2H2_1"/>
    <property type="match status" value="4"/>
</dbReference>
<accession>Q8ND82</accession>
<accession>A8K2V8</accession>
<accession>Q9NXR3</accession>
<evidence type="ECO:0000256" key="1">
    <source>
        <dbReference type="SAM" id="MobiDB-lite"/>
    </source>
</evidence>
<evidence type="ECO:0000305" key="2"/>
<evidence type="ECO:0007744" key="3">
    <source>
    </source>
</evidence>
<evidence type="ECO:0007744" key="4">
    <source>
    </source>
</evidence>
<evidence type="ECO:0007744" key="5">
    <source>
    </source>
</evidence>
<evidence type="ECO:0007744" key="6">
    <source>
    </source>
</evidence>
<evidence type="ECO:0007744" key="7">
    <source>
    </source>
</evidence>
<evidence type="ECO:0007744" key="8">
    <source>
    </source>
</evidence>
<evidence type="ECO:0007744" key="9">
    <source>
    </source>
</evidence>
<evidence type="ECO:0007744" key="10">
    <source>
    </source>
</evidence>
<comment type="function">
    <text>May function as a transcription factor.</text>
</comment>
<comment type="interaction">
    <interactant intactId="EBI-8831272">
        <id>Q8ND82</id>
    </interactant>
    <interactant intactId="EBI-78129">
        <id>P83916</id>
        <label>CBX1</label>
    </interactant>
    <organismsDiffer>false</organismsDiffer>
    <experiments>5</experiments>
</comment>
<comment type="interaction">
    <interactant intactId="EBI-8831272">
        <id>Q8ND82</id>
    </interactant>
    <interactant intactId="EBI-78176">
        <id>Q13185</id>
        <label>CBX3</label>
    </interactant>
    <organismsDiffer>false</organismsDiffer>
    <experiments>5</experiments>
</comment>
<comment type="interaction">
    <interactant intactId="EBI-8831272">
        <id>Q8ND82</id>
    </interactant>
    <interactant intactId="EBI-78219">
        <id>P45973</id>
        <label>CBX5</label>
    </interactant>
    <organismsDiffer>false</organismsDiffer>
    <experiments>3</experiments>
</comment>
<comment type="interaction">
    <interactant intactId="EBI-8831272">
        <id>Q8ND82</id>
    </interactant>
    <interactant intactId="EBI-618309">
        <id>Q08379</id>
        <label>GOLGA2</label>
    </interactant>
    <organismsDiffer>false</organismsDiffer>
    <experiments>3</experiments>
</comment>
<comment type="interaction">
    <interactant intactId="EBI-8831272">
        <id>Q8ND82</id>
    </interactant>
    <interactant intactId="EBI-12012928">
        <id>P60371</id>
        <label>KRTAP10-6</label>
    </interactant>
    <organismsDiffer>false</organismsDiffer>
    <experiments>3</experiments>
</comment>
<comment type="interaction">
    <interactant intactId="EBI-8831272">
        <id>Q8ND82</id>
    </interactant>
    <interactant intactId="EBI-947459">
        <id>Q9H2G4</id>
        <label>TSPYL2</label>
    </interactant>
    <organismsDiffer>false</organismsDiffer>
    <experiments>3</experiments>
</comment>
<comment type="subcellular location">
    <subcellularLocation>
        <location evidence="2">Nucleus</location>
    </subcellularLocation>
</comment>
<comment type="sequence caution" evidence="2">
    <conflict type="miscellaneous discrepancy">
        <sequence resource="EMBL-CDS" id="BAA90947"/>
    </conflict>
    <text>Contaminating sequence. Potential poly-A sequence.</text>
</comment>
<name>Z280C_HUMAN</name>
<proteinExistence type="evidence at protein level"/>
<gene>
    <name type="primary">ZNF280C</name>
    <name type="synonym">SUHW3</name>
    <name type="synonym">ZNF633</name>
</gene>
<protein>
    <recommendedName>
        <fullName>Zinc finger protein 280C</fullName>
    </recommendedName>
    <alternativeName>
        <fullName>Suppressor of hairy wing homolog 3</fullName>
    </alternativeName>
    <alternativeName>
        <fullName>Zinc finger protein 633</fullName>
    </alternativeName>
</protein>
<keyword id="KW-0238">DNA-binding</keyword>
<keyword id="KW-1017">Isopeptide bond</keyword>
<keyword id="KW-0479">Metal-binding</keyword>
<keyword id="KW-0539">Nucleus</keyword>
<keyword id="KW-0597">Phosphoprotein</keyword>
<keyword id="KW-1267">Proteomics identification</keyword>
<keyword id="KW-1185">Reference proteome</keyword>
<keyword id="KW-0677">Repeat</keyword>
<keyword id="KW-0804">Transcription</keyword>
<keyword id="KW-0805">Transcription regulation</keyword>
<keyword id="KW-0832">Ubl conjugation</keyword>
<keyword id="KW-0862">Zinc</keyword>
<keyword id="KW-0863">Zinc-finger</keyword>